<sequence>MVTNFNGILLFRRDYRERDMLIKFLTAEYGKKMFFIRGARRRGFKMAAELLPFTMGEYVGDLRDQGLSYINSVKSVQYLEHISQDIALNAYATYVMNLMDVAFPDNQPVGRWYQQLTSALQLIDQDVAPALVANVVEIQLLQPFGVAPELRWCTVCGRSDLPLDYSESYGGLLCQQHWHLDPHRLHASPAAIFYLRQFSVLDLAKVHSIKVKPRTAAELRRILDEIYQNSVGVRLKSKRFIDQMGSWYQPLAPRKNED</sequence>
<accession>Q88VS1</accession>
<accession>F9UPT1</accession>
<proteinExistence type="inferred from homology"/>
<comment type="function">
    <text evidence="1">Involved in DNA repair and RecF pathway recombination.</text>
</comment>
<comment type="similarity">
    <text evidence="1">Belongs to the RecO family.</text>
</comment>
<name>RECO_LACPL</name>
<gene>
    <name evidence="1" type="primary">recO</name>
    <name type="ordered locus">lp_1966</name>
</gene>
<organism>
    <name type="scientific">Lactiplantibacillus plantarum (strain ATCC BAA-793 / NCIMB 8826 / WCFS1)</name>
    <name type="common">Lactobacillus plantarum</name>
    <dbReference type="NCBI Taxonomy" id="220668"/>
    <lineage>
        <taxon>Bacteria</taxon>
        <taxon>Bacillati</taxon>
        <taxon>Bacillota</taxon>
        <taxon>Bacilli</taxon>
        <taxon>Lactobacillales</taxon>
        <taxon>Lactobacillaceae</taxon>
        <taxon>Lactiplantibacillus</taxon>
    </lineage>
</organism>
<keyword id="KW-0227">DNA damage</keyword>
<keyword id="KW-0233">DNA recombination</keyword>
<keyword id="KW-0234">DNA repair</keyword>
<keyword id="KW-1185">Reference proteome</keyword>
<reference key="1">
    <citation type="journal article" date="2003" name="Proc. Natl. Acad. Sci. U.S.A.">
        <title>Complete genome sequence of Lactobacillus plantarum WCFS1.</title>
        <authorList>
            <person name="Kleerebezem M."/>
            <person name="Boekhorst J."/>
            <person name="van Kranenburg R."/>
            <person name="Molenaar D."/>
            <person name="Kuipers O.P."/>
            <person name="Leer R."/>
            <person name="Tarchini R."/>
            <person name="Peters S.A."/>
            <person name="Sandbrink H.M."/>
            <person name="Fiers M.W.E.J."/>
            <person name="Stiekema W."/>
            <person name="Klein Lankhorst R.M."/>
            <person name="Bron P.A."/>
            <person name="Hoffer S.M."/>
            <person name="Nierop Groot M.N."/>
            <person name="Kerkhoven R."/>
            <person name="De Vries M."/>
            <person name="Ursing B."/>
            <person name="De Vos W.M."/>
            <person name="Siezen R.J."/>
        </authorList>
    </citation>
    <scope>NUCLEOTIDE SEQUENCE [LARGE SCALE GENOMIC DNA]</scope>
    <source>
        <strain>ATCC BAA-793 / NCIMB 8826 / WCFS1</strain>
    </source>
</reference>
<reference key="2">
    <citation type="journal article" date="2012" name="J. Bacteriol.">
        <title>Complete resequencing and reannotation of the Lactobacillus plantarum WCFS1 genome.</title>
        <authorList>
            <person name="Siezen R.J."/>
            <person name="Francke C."/>
            <person name="Renckens B."/>
            <person name="Boekhorst J."/>
            <person name="Wels M."/>
            <person name="Kleerebezem M."/>
            <person name="van Hijum S.A."/>
        </authorList>
    </citation>
    <scope>NUCLEOTIDE SEQUENCE [LARGE SCALE GENOMIC DNA]</scope>
    <scope>GENOME REANNOTATION</scope>
    <source>
        <strain>ATCC BAA-793 / NCIMB 8826 / WCFS1</strain>
    </source>
</reference>
<feature type="chain" id="PRO_0000204963" description="DNA repair protein RecO">
    <location>
        <begin position="1"/>
        <end position="258"/>
    </location>
</feature>
<evidence type="ECO:0000255" key="1">
    <source>
        <dbReference type="HAMAP-Rule" id="MF_00201"/>
    </source>
</evidence>
<dbReference type="EMBL" id="AL935263">
    <property type="protein sequence ID" value="CCC79220.1"/>
    <property type="molecule type" value="Genomic_DNA"/>
</dbReference>
<dbReference type="RefSeq" id="WP_003644472.1">
    <property type="nucleotide sequence ID" value="NC_004567.2"/>
</dbReference>
<dbReference type="RefSeq" id="YP_004889734.1">
    <property type="nucleotide sequence ID" value="NC_004567.2"/>
</dbReference>
<dbReference type="SMR" id="Q88VS1"/>
<dbReference type="STRING" id="220668.lp_1966"/>
<dbReference type="EnsemblBacteria" id="CCC79220">
    <property type="protein sequence ID" value="CCC79220"/>
    <property type="gene ID" value="lp_1966"/>
</dbReference>
<dbReference type="GeneID" id="89669276"/>
<dbReference type="KEGG" id="lpl:lp_1966"/>
<dbReference type="PATRIC" id="fig|220668.9.peg.1660"/>
<dbReference type="eggNOG" id="COG1381">
    <property type="taxonomic scope" value="Bacteria"/>
</dbReference>
<dbReference type="HOGENOM" id="CLU_066632_4_0_9"/>
<dbReference type="OrthoDB" id="9797083at2"/>
<dbReference type="PhylomeDB" id="Q88VS1"/>
<dbReference type="Proteomes" id="UP000000432">
    <property type="component" value="Chromosome"/>
</dbReference>
<dbReference type="GO" id="GO:0043590">
    <property type="term" value="C:bacterial nucleoid"/>
    <property type="evidence" value="ECO:0007669"/>
    <property type="project" value="TreeGrafter"/>
</dbReference>
<dbReference type="GO" id="GO:0006310">
    <property type="term" value="P:DNA recombination"/>
    <property type="evidence" value="ECO:0007669"/>
    <property type="project" value="UniProtKB-UniRule"/>
</dbReference>
<dbReference type="GO" id="GO:0006302">
    <property type="term" value="P:double-strand break repair"/>
    <property type="evidence" value="ECO:0007669"/>
    <property type="project" value="TreeGrafter"/>
</dbReference>
<dbReference type="Gene3D" id="2.40.50.140">
    <property type="entry name" value="Nucleic acid-binding proteins"/>
    <property type="match status" value="1"/>
</dbReference>
<dbReference type="Gene3D" id="1.20.1440.120">
    <property type="entry name" value="Recombination protein O, C-terminal domain"/>
    <property type="match status" value="1"/>
</dbReference>
<dbReference type="Gene3D" id="6.20.220.20">
    <property type="entry name" value="Recombination protein O, zinc-binding domain"/>
    <property type="match status" value="1"/>
</dbReference>
<dbReference type="HAMAP" id="MF_00201">
    <property type="entry name" value="RecO"/>
    <property type="match status" value="1"/>
</dbReference>
<dbReference type="InterPro" id="IPR037278">
    <property type="entry name" value="ARFGAP/RecO"/>
</dbReference>
<dbReference type="InterPro" id="IPR022572">
    <property type="entry name" value="DNA_rep/recomb_RecO_N"/>
</dbReference>
<dbReference type="InterPro" id="IPR012340">
    <property type="entry name" value="NA-bd_OB-fold"/>
</dbReference>
<dbReference type="InterPro" id="IPR003717">
    <property type="entry name" value="RecO"/>
</dbReference>
<dbReference type="InterPro" id="IPR042242">
    <property type="entry name" value="RecO_C"/>
</dbReference>
<dbReference type="NCBIfam" id="TIGR00613">
    <property type="entry name" value="reco"/>
    <property type="match status" value="1"/>
</dbReference>
<dbReference type="PANTHER" id="PTHR33991">
    <property type="entry name" value="DNA REPAIR PROTEIN RECO"/>
    <property type="match status" value="1"/>
</dbReference>
<dbReference type="PANTHER" id="PTHR33991:SF1">
    <property type="entry name" value="DNA REPAIR PROTEIN RECO"/>
    <property type="match status" value="1"/>
</dbReference>
<dbReference type="Pfam" id="PF02565">
    <property type="entry name" value="RecO_C"/>
    <property type="match status" value="1"/>
</dbReference>
<dbReference type="Pfam" id="PF11967">
    <property type="entry name" value="RecO_N"/>
    <property type="match status" value="1"/>
</dbReference>
<dbReference type="SUPFAM" id="SSF57863">
    <property type="entry name" value="ArfGap/RecO-like zinc finger"/>
    <property type="match status" value="1"/>
</dbReference>
<dbReference type="SUPFAM" id="SSF50249">
    <property type="entry name" value="Nucleic acid-binding proteins"/>
    <property type="match status" value="1"/>
</dbReference>
<protein>
    <recommendedName>
        <fullName evidence="1">DNA repair protein RecO</fullName>
    </recommendedName>
    <alternativeName>
        <fullName evidence="1">Recombination protein O</fullName>
    </alternativeName>
</protein>